<gene>
    <name evidence="1" type="primary">rplK</name>
    <name type="ordered locus">Sare_4329</name>
</gene>
<comment type="function">
    <text evidence="1">Forms part of the ribosomal stalk which helps the ribosome interact with GTP-bound translation factors.</text>
</comment>
<comment type="subunit">
    <text evidence="1">Part of the ribosomal stalk of the 50S ribosomal subunit. Interacts with L10 and the large rRNA to form the base of the stalk. L10 forms an elongated spine to which L12 dimers bind in a sequential fashion forming a multimeric L10(L12)X complex.</text>
</comment>
<comment type="PTM">
    <text evidence="1">One or more lysine residues are methylated.</text>
</comment>
<comment type="similarity">
    <text evidence="1">Belongs to the universal ribosomal protein uL11 family.</text>
</comment>
<feature type="chain" id="PRO_1000083400" description="Large ribosomal subunit protein uL11">
    <location>
        <begin position="1"/>
        <end position="143"/>
    </location>
</feature>
<accession>A8M543</accession>
<organism>
    <name type="scientific">Salinispora arenicola (strain CNS-205)</name>
    <dbReference type="NCBI Taxonomy" id="391037"/>
    <lineage>
        <taxon>Bacteria</taxon>
        <taxon>Bacillati</taxon>
        <taxon>Actinomycetota</taxon>
        <taxon>Actinomycetes</taxon>
        <taxon>Micromonosporales</taxon>
        <taxon>Micromonosporaceae</taxon>
        <taxon>Salinispora</taxon>
    </lineage>
</organism>
<name>RL11_SALAI</name>
<reference key="1">
    <citation type="submission" date="2007-10" db="EMBL/GenBank/DDBJ databases">
        <title>Complete sequence of Salinispora arenicola CNS-205.</title>
        <authorList>
            <consortium name="US DOE Joint Genome Institute"/>
            <person name="Copeland A."/>
            <person name="Lucas S."/>
            <person name="Lapidus A."/>
            <person name="Barry K."/>
            <person name="Glavina del Rio T."/>
            <person name="Dalin E."/>
            <person name="Tice H."/>
            <person name="Pitluck S."/>
            <person name="Foster B."/>
            <person name="Schmutz J."/>
            <person name="Larimer F."/>
            <person name="Land M."/>
            <person name="Hauser L."/>
            <person name="Kyrpides N."/>
            <person name="Ivanova N."/>
            <person name="Jensen P.R."/>
            <person name="Moore B.S."/>
            <person name="Penn K."/>
            <person name="Jenkins C."/>
            <person name="Udwary D."/>
            <person name="Xiang L."/>
            <person name="Gontang E."/>
            <person name="Richardson P."/>
        </authorList>
    </citation>
    <scope>NUCLEOTIDE SEQUENCE [LARGE SCALE GENOMIC DNA]</scope>
    <source>
        <strain>CNS-205</strain>
    </source>
</reference>
<evidence type="ECO:0000255" key="1">
    <source>
        <dbReference type="HAMAP-Rule" id="MF_00736"/>
    </source>
</evidence>
<evidence type="ECO:0000305" key="2"/>
<keyword id="KW-0488">Methylation</keyword>
<keyword id="KW-0687">Ribonucleoprotein</keyword>
<keyword id="KW-0689">Ribosomal protein</keyword>
<keyword id="KW-0694">RNA-binding</keyword>
<keyword id="KW-0699">rRNA-binding</keyword>
<protein>
    <recommendedName>
        <fullName evidence="1">Large ribosomal subunit protein uL11</fullName>
    </recommendedName>
    <alternativeName>
        <fullName evidence="2">50S ribosomal protein L11</fullName>
    </alternativeName>
</protein>
<dbReference type="EMBL" id="CP000850">
    <property type="protein sequence ID" value="ABW00111.1"/>
    <property type="molecule type" value="Genomic_DNA"/>
</dbReference>
<dbReference type="SMR" id="A8M543"/>
<dbReference type="STRING" id="391037.Sare_4329"/>
<dbReference type="KEGG" id="saq:Sare_4329"/>
<dbReference type="eggNOG" id="COG0080">
    <property type="taxonomic scope" value="Bacteria"/>
</dbReference>
<dbReference type="HOGENOM" id="CLU_074237_2_1_11"/>
<dbReference type="OrthoDB" id="9802408at2"/>
<dbReference type="GO" id="GO:0022625">
    <property type="term" value="C:cytosolic large ribosomal subunit"/>
    <property type="evidence" value="ECO:0007669"/>
    <property type="project" value="TreeGrafter"/>
</dbReference>
<dbReference type="GO" id="GO:0070180">
    <property type="term" value="F:large ribosomal subunit rRNA binding"/>
    <property type="evidence" value="ECO:0007669"/>
    <property type="project" value="UniProtKB-UniRule"/>
</dbReference>
<dbReference type="GO" id="GO:0003735">
    <property type="term" value="F:structural constituent of ribosome"/>
    <property type="evidence" value="ECO:0007669"/>
    <property type="project" value="InterPro"/>
</dbReference>
<dbReference type="GO" id="GO:0006412">
    <property type="term" value="P:translation"/>
    <property type="evidence" value="ECO:0007669"/>
    <property type="project" value="UniProtKB-UniRule"/>
</dbReference>
<dbReference type="CDD" id="cd00349">
    <property type="entry name" value="Ribosomal_L11"/>
    <property type="match status" value="1"/>
</dbReference>
<dbReference type="FunFam" id="1.10.10.250:FF:000001">
    <property type="entry name" value="50S ribosomal protein L11"/>
    <property type="match status" value="1"/>
</dbReference>
<dbReference type="FunFam" id="3.30.1550.10:FF:000001">
    <property type="entry name" value="50S ribosomal protein L11"/>
    <property type="match status" value="1"/>
</dbReference>
<dbReference type="Gene3D" id="1.10.10.250">
    <property type="entry name" value="Ribosomal protein L11, C-terminal domain"/>
    <property type="match status" value="1"/>
</dbReference>
<dbReference type="Gene3D" id="3.30.1550.10">
    <property type="entry name" value="Ribosomal protein L11/L12, N-terminal domain"/>
    <property type="match status" value="1"/>
</dbReference>
<dbReference type="HAMAP" id="MF_00736">
    <property type="entry name" value="Ribosomal_uL11"/>
    <property type="match status" value="1"/>
</dbReference>
<dbReference type="InterPro" id="IPR000911">
    <property type="entry name" value="Ribosomal_uL11"/>
</dbReference>
<dbReference type="InterPro" id="IPR006519">
    <property type="entry name" value="Ribosomal_uL11_bac-typ"/>
</dbReference>
<dbReference type="InterPro" id="IPR020783">
    <property type="entry name" value="Ribosomal_uL11_C"/>
</dbReference>
<dbReference type="InterPro" id="IPR036769">
    <property type="entry name" value="Ribosomal_uL11_C_sf"/>
</dbReference>
<dbReference type="InterPro" id="IPR020785">
    <property type="entry name" value="Ribosomal_uL11_CS"/>
</dbReference>
<dbReference type="InterPro" id="IPR020784">
    <property type="entry name" value="Ribosomal_uL11_N"/>
</dbReference>
<dbReference type="InterPro" id="IPR036796">
    <property type="entry name" value="Ribosomal_uL11_N_sf"/>
</dbReference>
<dbReference type="NCBIfam" id="TIGR01632">
    <property type="entry name" value="L11_bact"/>
    <property type="match status" value="1"/>
</dbReference>
<dbReference type="PANTHER" id="PTHR11661">
    <property type="entry name" value="60S RIBOSOMAL PROTEIN L12"/>
    <property type="match status" value="1"/>
</dbReference>
<dbReference type="PANTHER" id="PTHR11661:SF1">
    <property type="entry name" value="LARGE RIBOSOMAL SUBUNIT PROTEIN UL11M"/>
    <property type="match status" value="1"/>
</dbReference>
<dbReference type="Pfam" id="PF00298">
    <property type="entry name" value="Ribosomal_L11"/>
    <property type="match status" value="1"/>
</dbReference>
<dbReference type="Pfam" id="PF03946">
    <property type="entry name" value="Ribosomal_L11_N"/>
    <property type="match status" value="1"/>
</dbReference>
<dbReference type="SMART" id="SM00649">
    <property type="entry name" value="RL11"/>
    <property type="match status" value="1"/>
</dbReference>
<dbReference type="SUPFAM" id="SSF54747">
    <property type="entry name" value="Ribosomal L11/L12e N-terminal domain"/>
    <property type="match status" value="1"/>
</dbReference>
<dbReference type="SUPFAM" id="SSF46906">
    <property type="entry name" value="Ribosomal protein L11, C-terminal domain"/>
    <property type="match status" value="1"/>
</dbReference>
<dbReference type="PROSITE" id="PS00359">
    <property type="entry name" value="RIBOSOMAL_L11"/>
    <property type="match status" value="1"/>
</dbReference>
<proteinExistence type="inferred from homology"/>
<sequence>MPPKKKLVKTFTLQLPAGQATPAPPVGPALGQHGVNIMEFCKSYNAQTESQRGDIVPAEISVYEDRTFTFVLKTPPAARLLIKAAGVAKGSGVPHMEKVGQVSRAQLREIAEKKMADLNANDLDQAEKIIAGTARSMGLNVVD</sequence>